<name>WDR6_PONAB</name>
<accession>Q5RB07</accession>
<reference key="1">
    <citation type="submission" date="2004-11" db="EMBL/GenBank/DDBJ databases">
        <authorList>
            <consortium name="The German cDNA consortium"/>
        </authorList>
    </citation>
    <scope>NUCLEOTIDE SEQUENCE [LARGE SCALE MRNA]</scope>
    <source>
        <tissue>Kidney</tissue>
    </source>
</reference>
<gene>
    <name type="primary">WDR6</name>
</gene>
<keyword id="KW-0007">Acetylation</keyword>
<keyword id="KW-0131">Cell cycle</keyword>
<keyword id="KW-0963">Cytoplasm</keyword>
<keyword id="KW-1185">Reference proteome</keyword>
<keyword id="KW-0677">Repeat</keyword>
<keyword id="KW-0819">tRNA processing</keyword>
<keyword id="KW-0853">WD repeat</keyword>
<feature type="chain" id="PRO_0000393461" description="tRNA (34-2'-O)-methyltransferase regulator WDR6">
    <location>
        <begin position="1"/>
        <end position="1121"/>
    </location>
</feature>
<feature type="repeat" description="WD 1">
    <location>
        <begin position="53"/>
        <end position="97"/>
    </location>
</feature>
<feature type="repeat" description="WD 2">
    <location>
        <begin position="105"/>
        <end position="143"/>
    </location>
</feature>
<feature type="repeat" description="WD 3">
    <location>
        <begin position="147"/>
        <end position="189"/>
    </location>
</feature>
<feature type="repeat" description="WD 4">
    <location>
        <begin position="200"/>
        <end position="238"/>
    </location>
</feature>
<feature type="repeat" description="WD 5">
    <location>
        <begin position="247"/>
        <end position="285"/>
    </location>
</feature>
<feature type="repeat" description="WD 6">
    <location>
        <begin position="289"/>
        <end position="327"/>
    </location>
</feature>
<feature type="repeat" description="WD 7">
    <location>
        <begin position="335"/>
        <end position="376"/>
    </location>
</feature>
<feature type="repeat" description="WD 8">
    <location>
        <begin position="381"/>
        <end position="422"/>
    </location>
</feature>
<feature type="repeat" description="WD 9">
    <location>
        <begin position="425"/>
        <end position="470"/>
    </location>
</feature>
<feature type="repeat" description="WD 10">
    <location>
        <begin position="476"/>
        <end position="520"/>
    </location>
</feature>
<feature type="repeat" description="WD 11">
    <location>
        <begin position="559"/>
        <end position="598"/>
    </location>
</feature>
<feature type="repeat" description="WD 12">
    <location>
        <begin position="604"/>
        <end position="642"/>
    </location>
</feature>
<feature type="repeat" description="WD 13">
    <location>
        <begin position="645"/>
        <end position="684"/>
    </location>
</feature>
<feature type="repeat" description="WD 14">
    <location>
        <begin position="739"/>
        <end position="785"/>
    </location>
</feature>
<feature type="repeat" description="WD 15">
    <location>
        <begin position="848"/>
        <end position="893"/>
    </location>
</feature>
<feature type="repeat" description="WD 16">
    <location>
        <begin position="901"/>
        <end position="946"/>
    </location>
</feature>
<feature type="repeat" description="WD 17">
    <location>
        <begin position="970"/>
        <end position="1012"/>
    </location>
</feature>
<feature type="repeat" description="WD 18">
    <location>
        <begin position="1036"/>
        <end position="1073"/>
    </location>
</feature>
<feature type="repeat" description="WD 19">
    <location>
        <begin position="1079"/>
        <end position="1121"/>
    </location>
</feature>
<feature type="modified residue" description="N-acetylmethionine" evidence="2">
    <location>
        <position position="1"/>
    </location>
</feature>
<dbReference type="EMBL" id="CR858852">
    <property type="protein sequence ID" value="CAH91053.1"/>
    <property type="molecule type" value="mRNA"/>
</dbReference>
<dbReference type="RefSeq" id="NP_001127369.1">
    <property type="nucleotide sequence ID" value="NM_001133897.1"/>
</dbReference>
<dbReference type="STRING" id="9601.ENSPPYP00000015535"/>
<dbReference type="GeneID" id="100174434"/>
<dbReference type="KEGG" id="pon:100174434"/>
<dbReference type="CTD" id="11180"/>
<dbReference type="eggNOG" id="KOG0974">
    <property type="taxonomic scope" value="Eukaryota"/>
</dbReference>
<dbReference type="InParanoid" id="Q5RB07"/>
<dbReference type="OrthoDB" id="5594999at2759"/>
<dbReference type="Proteomes" id="UP000001595">
    <property type="component" value="Unplaced"/>
</dbReference>
<dbReference type="GO" id="GO:0005737">
    <property type="term" value="C:cytoplasm"/>
    <property type="evidence" value="ECO:0007669"/>
    <property type="project" value="UniProtKB-SubCell"/>
</dbReference>
<dbReference type="GO" id="GO:0030234">
    <property type="term" value="F:enzyme regulator activity"/>
    <property type="evidence" value="ECO:0000250"/>
    <property type="project" value="UniProtKB"/>
</dbReference>
<dbReference type="GO" id="GO:0000049">
    <property type="term" value="F:tRNA binding"/>
    <property type="evidence" value="ECO:0000250"/>
    <property type="project" value="UniProtKB"/>
</dbReference>
<dbReference type="GO" id="GO:0002130">
    <property type="term" value="P:wobble position ribose methylation"/>
    <property type="evidence" value="ECO:0000250"/>
    <property type="project" value="UniProtKB"/>
</dbReference>
<dbReference type="FunFam" id="2.130.10.10:FF:000719">
    <property type="entry name" value="WD repeat-containing protein 6"/>
    <property type="match status" value="1"/>
</dbReference>
<dbReference type="FunFam" id="2.130.10.10:FF:000759">
    <property type="entry name" value="WD repeat-containing protein 6"/>
    <property type="match status" value="1"/>
</dbReference>
<dbReference type="FunFam" id="2.130.10.10:FF:000806">
    <property type="entry name" value="WD repeat-containing protein 6"/>
    <property type="match status" value="1"/>
</dbReference>
<dbReference type="FunFam" id="2.130.10.10:FF:000901">
    <property type="entry name" value="WD repeat-containing protein 6"/>
    <property type="match status" value="1"/>
</dbReference>
<dbReference type="Gene3D" id="2.130.10.10">
    <property type="entry name" value="YVTN repeat-like/Quinoprotein amine dehydrogenase"/>
    <property type="match status" value="4"/>
</dbReference>
<dbReference type="InterPro" id="IPR011047">
    <property type="entry name" value="Quinoprotein_ADH-like_sf"/>
</dbReference>
<dbReference type="InterPro" id="IPR051973">
    <property type="entry name" value="tRNA_Anticodon_Mtase-Reg"/>
</dbReference>
<dbReference type="InterPro" id="IPR015943">
    <property type="entry name" value="WD40/YVTN_repeat-like_dom_sf"/>
</dbReference>
<dbReference type="InterPro" id="IPR036322">
    <property type="entry name" value="WD40_repeat_dom_sf"/>
</dbReference>
<dbReference type="InterPro" id="IPR001680">
    <property type="entry name" value="WD40_rpt"/>
</dbReference>
<dbReference type="PANTHER" id="PTHR14344">
    <property type="entry name" value="WD REPEAT PROTEIN"/>
    <property type="match status" value="1"/>
</dbReference>
<dbReference type="PANTHER" id="PTHR14344:SF3">
    <property type="entry name" value="WD REPEAT-CONTAINING PROTEIN 6"/>
    <property type="match status" value="1"/>
</dbReference>
<dbReference type="Pfam" id="PF00400">
    <property type="entry name" value="WD40"/>
    <property type="match status" value="3"/>
</dbReference>
<dbReference type="SMART" id="SM00320">
    <property type="entry name" value="WD40"/>
    <property type="match status" value="7"/>
</dbReference>
<dbReference type="SUPFAM" id="SSF50998">
    <property type="entry name" value="Quinoprotein alcohol dehydrogenase-like"/>
    <property type="match status" value="1"/>
</dbReference>
<dbReference type="SUPFAM" id="SSF50978">
    <property type="entry name" value="WD40 repeat-like"/>
    <property type="match status" value="2"/>
</dbReference>
<dbReference type="PROSITE" id="PS00678">
    <property type="entry name" value="WD_REPEATS_1"/>
    <property type="match status" value="1"/>
</dbReference>
<dbReference type="PROSITE" id="PS50082">
    <property type="entry name" value="WD_REPEATS_2"/>
    <property type="match status" value="1"/>
</dbReference>
<dbReference type="PROSITE" id="PS50294">
    <property type="entry name" value="WD_REPEATS_REGION"/>
    <property type="match status" value="1"/>
</dbReference>
<proteinExistence type="evidence at transcript level"/>
<comment type="function">
    <text evidence="2">Together with methyltransferase FTSJ1, methylates the 2'-O-ribose of nucleotides at position 34 of the tRNA anticodon loop of substrate tRNAs (By similarity). Required for the correct positioning of the substrate tRNA for methylation (By similarity). Required to suppress amino acid starvation-induced autophagy (By similarity). Enhances the STK11/LKB1-induced cell growth suppression activity (By similarity).</text>
</comment>
<comment type="subunit">
    <text evidence="1 2">Interacts with FTSJ1; the interaction is direct, and required for 2'-O-methylation of position 34 in substrate tRNAs (By similarity). Interacts with IRS4 (By similarity). Interacts with STK11/LKB1 (By similarity).</text>
</comment>
<comment type="subcellular location">
    <subcellularLocation>
        <location evidence="2">Cytoplasm</location>
    </subcellularLocation>
    <text evidence="2">Colocalizes in the cytoplasm with STK11/LKB1.</text>
</comment>
<comment type="similarity">
    <text evidence="3">Belongs to the WD repeat WDR6 family.</text>
</comment>
<protein>
    <recommendedName>
        <fullName evidence="3">tRNA (34-2'-O)-methyltransferase regulator WDR6</fullName>
    </recommendedName>
    <alternativeName>
        <fullName>WD repeat-containing protein 6</fullName>
    </alternativeName>
</protein>
<organism>
    <name type="scientific">Pongo abelii</name>
    <name type="common">Sumatran orangutan</name>
    <name type="synonym">Pongo pygmaeus abelii</name>
    <dbReference type="NCBI Taxonomy" id="9601"/>
    <lineage>
        <taxon>Eukaryota</taxon>
        <taxon>Metazoa</taxon>
        <taxon>Chordata</taxon>
        <taxon>Craniata</taxon>
        <taxon>Vertebrata</taxon>
        <taxon>Euteleostomi</taxon>
        <taxon>Mammalia</taxon>
        <taxon>Eutheria</taxon>
        <taxon>Euarchontoglires</taxon>
        <taxon>Primates</taxon>
        <taxon>Haplorrhini</taxon>
        <taxon>Catarrhini</taxon>
        <taxon>Hominidae</taxon>
        <taxon>Pongo</taxon>
    </lineage>
</organism>
<evidence type="ECO:0000250" key="1">
    <source>
        <dbReference type="UniProtKB" id="Q5XFW6"/>
    </source>
</evidence>
<evidence type="ECO:0000250" key="2">
    <source>
        <dbReference type="UniProtKB" id="Q9NNW5"/>
    </source>
</evidence>
<evidence type="ECO:0000305" key="3"/>
<sequence>MDALEDYVWPRATSELILLPVTGLECVGDRLLAGEGPDVLVYSLDFGGHLRMIKRVQNLLGHYLIHGFRIRPEPNGDLDLEAMVAVFGSKGLRVVKISWGQGHFRELWRSGLWNMSDWIWDARWLEGNIALALGHNSVVLYDPVVGCILQEVPCTDRCTLSSACLIGDAWKELTIVAGAVSNQLLVWYPATALADNKPVAPDRRISGHVGIIFSMSYLESKGLLATASEDRSVRIWKVGDLRVPGGRVQNIGHCFGHSARVWQVKLLENYLISAGEDCVCLVWSHEGEILQAFRGHQGRGIRAIAAHERQAWVITGGDDSGIRLWHLVGRGYRGLGVSALCFKSRSRPGTLKAVTLAGSWRLLAVTDTGALYLYDVEVKRWEQLLEDKHFQSYCLLEAAPGPEGFGLCAMANGEGRVKVVPINTPTAAVDRTLFPGKVHSLSWALRGYEELLLLASGPGGVVACLEISAAPSGKAIFVKERCRYLLPPSKQRWHTCSAFLPPGDFLVCSDRRGSVLLFPSRPGLLKDPGVGGKAGAGAGAPGVGSGSSGGGNAFTGLGPVSTLPSLHGKQGVTSVTCHGGYVYTTGRDGAYYQLFVRDSQLQPVLRQKSCRGMNWLAGLRIVPDGSMVILGFHANEFVVWNPRSHEKLHIVNCGGGHRSWAFSDTEAAMAFAYLKDGDVMLYRALGGCTRPHVILREGLHGREITCVKRVGTITLGPEYGVPSFMQPDDLEPGSEGPDLTDIVITCSEDTTVCVLALPTTTGSAHALTAVCNHISSVRAVAVWGIGTPGGPQDPQPGLSAHVVSAGGRAEMHCFSIMVTPDPSTPSRLACHVMHLSSHRLDEYWDRQHNRHRMVKVDPETRYMSLAVCELDQPSLGPLVAAACSDGAVRLFLLQDSGRILQLLAETFHHKRCVLKVHSFTHEVPNQRRRLLLCSAATDGSLAFWDLTTMLDHDSTVLEPPVDPGLPYRLGTPSLTLQAHSCGINSLHTLPTREGHHLVASGSEDGSLHVFVLAVEMLELEEAVGEAGLVPQLRVLEEYSVPCAHAAHVTGLKILSPSIMVSASIDQRLTFWRLGHGEPTFMNSTVFHVPDVADMDCWPVSPEFGHRCALGGQGLEVYNWYD</sequence>